<evidence type="ECO:0000255" key="1">
    <source>
        <dbReference type="HAMAP-Rule" id="MF_00120"/>
    </source>
</evidence>
<protein>
    <recommendedName>
        <fullName evidence="1">Glutamyl-tRNA(Gln) amidotransferase subunit A</fullName>
        <shortName evidence="1">Glu-ADT subunit A</shortName>
        <ecNumber evidence="1">6.3.5.7</ecNumber>
    </recommendedName>
</protein>
<feature type="chain" id="PRO_1000057797" description="Glutamyl-tRNA(Gln) amidotransferase subunit A">
    <location>
        <begin position="1"/>
        <end position="491"/>
    </location>
</feature>
<feature type="active site" description="Charge relay system" evidence="1">
    <location>
        <position position="79"/>
    </location>
</feature>
<feature type="active site" description="Charge relay system" evidence="1">
    <location>
        <position position="158"/>
    </location>
</feature>
<feature type="active site" description="Acyl-ester intermediate" evidence="1">
    <location>
        <position position="182"/>
    </location>
</feature>
<sequence>MSELFKLTLSDITAKLKAREVSAVELATEGLALCEAAQPKLNAFTAFDADKTLAMAKASDEKLARGEGGLIEGAPLAIKDLFAVEGVETAASSNILKGFKPTYESSVTAKLWENGGVFLCKTSMDEFAMGSSNETSNTGPVNNPWKGANGEMLTPGGSSGGSAAAVAADLCFGATGTDTGGSIRQPAAFTGTVGVKATYGRTSRWGAVAFASSLDHPGPFAKTVKDSALMLQAMSGHDPKDSTSLPNDVPDFVAAVGQSVKGLRIGVPKEYRVDGMPAEIDEAWQKGIDWLKAAGCEIVDISLPHTKYALPAYYIVAPAEASSNLARYDGMRYGNRVEGTNLNATYENTRGAGFGHEVQRRIMIGTYVLSAGYYDAYYLRAQKVRTRILQDFEQAFEKVDAVLTPSAPSAAFALGSKSDDPIAMYLNDVFTVTANLAGLPAMSVPAGVDKDGLPLGLQIITPALDEETMFKVGAAIEDSAGFVAKPENWWA</sequence>
<comment type="function">
    <text evidence="1">Allows the formation of correctly charged Gln-tRNA(Gln) through the transamidation of misacylated Glu-tRNA(Gln) in organisms which lack glutaminyl-tRNA synthetase. The reaction takes place in the presence of glutamine and ATP through an activated gamma-phospho-Glu-tRNA(Gln).</text>
</comment>
<comment type="catalytic activity">
    <reaction evidence="1">
        <text>L-glutamyl-tRNA(Gln) + L-glutamine + ATP + H2O = L-glutaminyl-tRNA(Gln) + L-glutamate + ADP + phosphate + H(+)</text>
        <dbReference type="Rhea" id="RHEA:17521"/>
        <dbReference type="Rhea" id="RHEA-COMP:9681"/>
        <dbReference type="Rhea" id="RHEA-COMP:9684"/>
        <dbReference type="ChEBI" id="CHEBI:15377"/>
        <dbReference type="ChEBI" id="CHEBI:15378"/>
        <dbReference type="ChEBI" id="CHEBI:29985"/>
        <dbReference type="ChEBI" id="CHEBI:30616"/>
        <dbReference type="ChEBI" id="CHEBI:43474"/>
        <dbReference type="ChEBI" id="CHEBI:58359"/>
        <dbReference type="ChEBI" id="CHEBI:78520"/>
        <dbReference type="ChEBI" id="CHEBI:78521"/>
        <dbReference type="ChEBI" id="CHEBI:456216"/>
        <dbReference type="EC" id="6.3.5.7"/>
    </reaction>
</comment>
<comment type="subunit">
    <text evidence="1">Heterotrimer of A, B and C subunits.</text>
</comment>
<comment type="similarity">
    <text evidence="1">Belongs to the amidase family. GatA subfamily.</text>
</comment>
<accession>Q0ANY9</accession>
<reference key="1">
    <citation type="submission" date="2006-08" db="EMBL/GenBank/DDBJ databases">
        <title>Complete sequence of Maricaulis maris MCS10.</title>
        <authorList>
            <consortium name="US DOE Joint Genome Institute"/>
            <person name="Copeland A."/>
            <person name="Lucas S."/>
            <person name="Lapidus A."/>
            <person name="Barry K."/>
            <person name="Detter J.C."/>
            <person name="Glavina del Rio T."/>
            <person name="Hammon N."/>
            <person name="Israni S."/>
            <person name="Dalin E."/>
            <person name="Tice H."/>
            <person name="Pitluck S."/>
            <person name="Saunders E."/>
            <person name="Brettin T."/>
            <person name="Bruce D."/>
            <person name="Han C."/>
            <person name="Tapia R."/>
            <person name="Gilna P."/>
            <person name="Schmutz J."/>
            <person name="Larimer F."/>
            <person name="Land M."/>
            <person name="Hauser L."/>
            <person name="Kyrpides N."/>
            <person name="Mikhailova N."/>
            <person name="Viollier P."/>
            <person name="Stephens C."/>
            <person name="Richardson P."/>
        </authorList>
    </citation>
    <scope>NUCLEOTIDE SEQUENCE [LARGE SCALE GENOMIC DNA]</scope>
    <source>
        <strain>MCS10</strain>
    </source>
</reference>
<keyword id="KW-0067">ATP-binding</keyword>
<keyword id="KW-0436">Ligase</keyword>
<keyword id="KW-0547">Nucleotide-binding</keyword>
<keyword id="KW-0648">Protein biosynthesis</keyword>
<keyword id="KW-1185">Reference proteome</keyword>
<proteinExistence type="inferred from homology"/>
<name>GATA_MARMM</name>
<gene>
    <name evidence="1" type="primary">gatA</name>
    <name type="ordered locus">Mmar10_1706</name>
</gene>
<dbReference type="EC" id="6.3.5.7" evidence="1"/>
<dbReference type="EMBL" id="CP000449">
    <property type="protein sequence ID" value="ABI65998.1"/>
    <property type="molecule type" value="Genomic_DNA"/>
</dbReference>
<dbReference type="RefSeq" id="WP_011643644.1">
    <property type="nucleotide sequence ID" value="NC_008347.1"/>
</dbReference>
<dbReference type="SMR" id="Q0ANY9"/>
<dbReference type="STRING" id="394221.Mmar10_1706"/>
<dbReference type="KEGG" id="mmr:Mmar10_1706"/>
<dbReference type="eggNOG" id="COG0154">
    <property type="taxonomic scope" value="Bacteria"/>
</dbReference>
<dbReference type="HOGENOM" id="CLU_009600_0_3_5"/>
<dbReference type="OrthoDB" id="9811471at2"/>
<dbReference type="Proteomes" id="UP000001964">
    <property type="component" value="Chromosome"/>
</dbReference>
<dbReference type="GO" id="GO:0030956">
    <property type="term" value="C:glutamyl-tRNA(Gln) amidotransferase complex"/>
    <property type="evidence" value="ECO:0007669"/>
    <property type="project" value="InterPro"/>
</dbReference>
<dbReference type="GO" id="GO:0005524">
    <property type="term" value="F:ATP binding"/>
    <property type="evidence" value="ECO:0007669"/>
    <property type="project" value="UniProtKB-KW"/>
</dbReference>
<dbReference type="GO" id="GO:0050567">
    <property type="term" value="F:glutaminyl-tRNA synthase (glutamine-hydrolyzing) activity"/>
    <property type="evidence" value="ECO:0007669"/>
    <property type="project" value="UniProtKB-UniRule"/>
</dbReference>
<dbReference type="GO" id="GO:0006412">
    <property type="term" value="P:translation"/>
    <property type="evidence" value="ECO:0007669"/>
    <property type="project" value="UniProtKB-UniRule"/>
</dbReference>
<dbReference type="Gene3D" id="3.90.1300.10">
    <property type="entry name" value="Amidase signature (AS) domain"/>
    <property type="match status" value="1"/>
</dbReference>
<dbReference type="HAMAP" id="MF_00120">
    <property type="entry name" value="GatA"/>
    <property type="match status" value="1"/>
</dbReference>
<dbReference type="InterPro" id="IPR000120">
    <property type="entry name" value="Amidase"/>
</dbReference>
<dbReference type="InterPro" id="IPR020556">
    <property type="entry name" value="Amidase_CS"/>
</dbReference>
<dbReference type="InterPro" id="IPR023631">
    <property type="entry name" value="Amidase_dom"/>
</dbReference>
<dbReference type="InterPro" id="IPR036928">
    <property type="entry name" value="AS_sf"/>
</dbReference>
<dbReference type="InterPro" id="IPR004412">
    <property type="entry name" value="GatA"/>
</dbReference>
<dbReference type="NCBIfam" id="TIGR00132">
    <property type="entry name" value="gatA"/>
    <property type="match status" value="1"/>
</dbReference>
<dbReference type="PANTHER" id="PTHR11895:SF151">
    <property type="entry name" value="GLUTAMYL-TRNA(GLN) AMIDOTRANSFERASE SUBUNIT A"/>
    <property type="match status" value="1"/>
</dbReference>
<dbReference type="PANTHER" id="PTHR11895">
    <property type="entry name" value="TRANSAMIDASE"/>
    <property type="match status" value="1"/>
</dbReference>
<dbReference type="Pfam" id="PF01425">
    <property type="entry name" value="Amidase"/>
    <property type="match status" value="1"/>
</dbReference>
<dbReference type="SUPFAM" id="SSF75304">
    <property type="entry name" value="Amidase signature (AS) enzymes"/>
    <property type="match status" value="1"/>
</dbReference>
<dbReference type="PROSITE" id="PS00571">
    <property type="entry name" value="AMIDASES"/>
    <property type="match status" value="1"/>
</dbReference>
<organism>
    <name type="scientific">Maricaulis maris (strain MCS10)</name>
    <name type="common">Caulobacter maris</name>
    <dbReference type="NCBI Taxonomy" id="394221"/>
    <lineage>
        <taxon>Bacteria</taxon>
        <taxon>Pseudomonadati</taxon>
        <taxon>Pseudomonadota</taxon>
        <taxon>Alphaproteobacteria</taxon>
        <taxon>Maricaulales</taxon>
        <taxon>Maricaulaceae</taxon>
        <taxon>Maricaulis</taxon>
    </lineage>
</organism>